<name>GAS3_YEAST</name>
<sequence>MQLSKSILLAALAATPSLVNAMLPIHIKNYRFIKPSSATNSESDNEVFFVKGVDYQPGGSSGYDADSDTDILSDPEVCARDAYAFQQLGVNTVRIYSLNPDLNHDKCMTIFNNAGIYAILDVNSGNYGESLNRADPSGTYDSLYLSRVFKFIDAFKNYPNVLGFFSGNEVINDQSDYAKIDPPYIRAVQRDMKQYISKHANRSIPVGYSAADNTDLRLATFKYLQCNSLDGNKVNDDLDISKSDFFGLNTYEWCSGTSSWESSGYDKLNSTFEDAVIPLIFSEYGCNKNTPRTFDEVSEGLYGGLKNVFSGGLVYEYTEEANNYGLVKLDDSGSLTYKDDFVNLESQLKNVSLPTTKESEISSDSIYKCDNSAITNIYSGFGTNNFTLPSQPAEIANMIEYGVNGTNTGKILTDYAVPTTFNYTIKNNKDDTISATISYDKANSLNELDVTATTVAKSASTSQSSSRSLTSSTSPSSSTGSSSSTGSSSASSSSKSKGVGNIVNVSFSQSGYLALFAGLISALL</sequence>
<reference key="1">
    <citation type="journal article" date="1997" name="Nature">
        <title>The nucleotide sequence of Saccharomyces cerevisiae chromosome XIII.</title>
        <authorList>
            <person name="Bowman S."/>
            <person name="Churcher C.M."/>
            <person name="Badcock K."/>
            <person name="Brown D."/>
            <person name="Chillingworth T."/>
            <person name="Connor R."/>
            <person name="Dedman K."/>
            <person name="Devlin K."/>
            <person name="Gentles S."/>
            <person name="Hamlin N."/>
            <person name="Hunt S."/>
            <person name="Jagels K."/>
            <person name="Lye G."/>
            <person name="Moule S."/>
            <person name="Odell C."/>
            <person name="Pearson D."/>
            <person name="Rajandream M.A."/>
            <person name="Rice P."/>
            <person name="Skelton J."/>
            <person name="Walsh S.V."/>
            <person name="Whitehead S."/>
            <person name="Barrell B.G."/>
        </authorList>
    </citation>
    <scope>NUCLEOTIDE SEQUENCE [LARGE SCALE GENOMIC DNA]</scope>
    <source>
        <strain>ATCC 204508 / S288c</strain>
    </source>
</reference>
<reference key="2">
    <citation type="journal article" date="2014" name="G3 (Bethesda)">
        <title>The reference genome sequence of Saccharomyces cerevisiae: Then and now.</title>
        <authorList>
            <person name="Engel S.R."/>
            <person name="Dietrich F.S."/>
            <person name="Fisk D.G."/>
            <person name="Binkley G."/>
            <person name="Balakrishnan R."/>
            <person name="Costanzo M.C."/>
            <person name="Dwight S.S."/>
            <person name="Hitz B.C."/>
            <person name="Karra K."/>
            <person name="Nash R.S."/>
            <person name="Weng S."/>
            <person name="Wong E.D."/>
            <person name="Lloyd P."/>
            <person name="Skrzypek M.S."/>
            <person name="Miyasato S.R."/>
            <person name="Simison M."/>
            <person name="Cherry J.M."/>
        </authorList>
    </citation>
    <scope>GENOME REANNOTATION</scope>
    <source>
        <strain>ATCC 204508 / S288c</strain>
    </source>
</reference>
<reference key="3">
    <citation type="journal article" date="2007" name="Genome Res.">
        <title>Approaching a complete repository of sequence-verified protein-encoding clones for Saccharomyces cerevisiae.</title>
        <authorList>
            <person name="Hu Y."/>
            <person name="Rolfs A."/>
            <person name="Bhullar B."/>
            <person name="Murthy T.V.S."/>
            <person name="Zhu C."/>
            <person name="Berger M.F."/>
            <person name="Camargo A.A."/>
            <person name="Kelley F."/>
            <person name="McCarron S."/>
            <person name="Jepson D."/>
            <person name="Richardson A."/>
            <person name="Raphael J."/>
            <person name="Moreira D."/>
            <person name="Taycher E."/>
            <person name="Zuo D."/>
            <person name="Mohr S."/>
            <person name="Kane M.F."/>
            <person name="Williamson J."/>
            <person name="Simpson A.J.G."/>
            <person name="Bulyk M.L."/>
            <person name="Harlow E."/>
            <person name="Marsischky G."/>
            <person name="Kolodner R.D."/>
            <person name="LaBaer J."/>
        </authorList>
    </citation>
    <scope>NUCLEOTIDE SEQUENCE [GENOMIC DNA]</scope>
    <source>
        <strain>ATCC 204508 / S288c</strain>
    </source>
</reference>
<reference key="4">
    <citation type="journal article" date="2000" name="Electrophoresis">
        <title>A proteomic approach for the study of Saccharomyces cerevisiae cell wall biogenesis.</title>
        <authorList>
            <person name="Pardo M."/>
            <person name="Ward M."/>
            <person name="Bains S."/>
            <person name="Molina M."/>
            <person name="Blackstock W."/>
            <person name="Gil C."/>
            <person name="Nombela C."/>
        </authorList>
    </citation>
    <scope>IDENTIFICATION</scope>
</reference>
<reference key="5">
    <citation type="journal article" date="2003" name="Nature">
        <title>Global analysis of protein expression in yeast.</title>
        <authorList>
            <person name="Ghaemmaghami S."/>
            <person name="Huh W.-K."/>
            <person name="Bower K."/>
            <person name="Howson R.W."/>
            <person name="Belle A."/>
            <person name="Dephoure N."/>
            <person name="O'Shea E.K."/>
            <person name="Weissman J.S."/>
        </authorList>
    </citation>
    <scope>LEVEL OF PROTEIN EXPRESSION [LARGE SCALE ANALYSIS]</scope>
</reference>
<reference key="6">
    <citation type="journal article" date="2005" name="J. Biol. Chem.">
        <title>Comprehensive proteomic analysis of Saccharomyces cerevisiae cell walls: identification of proteins covalently attached via glycosylphosphatidylinositol remnants or mild alkali-sensitive linkages.</title>
        <authorList>
            <person name="Yin Q.Y."/>
            <person name="de Groot P.W.J."/>
            <person name="Dekker H.L."/>
            <person name="de Jong L."/>
            <person name="Klis F.M."/>
            <person name="de Koster C.G."/>
        </authorList>
    </citation>
    <scope>SUBCELLULAR LOCATION</scope>
    <scope>IDENTIFICATION BY MASS SPECTROMETRY</scope>
    <scope>GPI-ANCHOR</scope>
</reference>
<reference key="7">
    <citation type="journal article" date="2007" name="Yeast">
        <title>The Gas family of proteins of Saccharomyces cerevisiae: characterization and evolutionary analysis.</title>
        <authorList>
            <person name="Ragni E."/>
            <person name="Fontaine T."/>
            <person name="Gissi C."/>
            <person name="Latge J.-P."/>
            <person name="Popolo L."/>
        </authorList>
    </citation>
    <scope>FUNCTION</scope>
</reference>
<reference key="8">
    <citation type="journal article" date="2009" name="Mol. Syst. Biol.">
        <title>Global analysis of the glycoproteome in Saccharomyces cerevisiae reveals new roles for protein glycosylation in eukaryotes.</title>
        <authorList>
            <person name="Kung L.A."/>
            <person name="Tao S.-C."/>
            <person name="Qian J."/>
            <person name="Smith M.G."/>
            <person name="Snyder M."/>
            <person name="Zhu H."/>
        </authorList>
    </citation>
    <scope>GLYCOSYLATION [LARGE SCALE ANALYSIS]</scope>
</reference>
<feature type="signal peptide" evidence="3">
    <location>
        <begin position="1"/>
        <end position="21"/>
    </location>
</feature>
<feature type="chain" id="PRO_0000010477" description="Probable 1,3-beta-glucanosyltransferase GAS3">
    <location>
        <begin position="22"/>
        <end position="498"/>
    </location>
</feature>
<feature type="propeptide" id="PRO_0000010478" description="Removed in mature form" evidence="3">
    <location>
        <begin position="499"/>
        <end position="524"/>
    </location>
</feature>
<feature type="region of interest" description="Disordered" evidence="4">
    <location>
        <begin position="461"/>
        <end position="498"/>
    </location>
</feature>
<feature type="active site" description="Proton donor" evidence="1">
    <location>
        <position position="169"/>
    </location>
</feature>
<feature type="active site" description="Nucleophile" evidence="1">
    <location>
        <position position="283"/>
    </location>
</feature>
<feature type="binding site" evidence="2">
    <location>
        <position position="96"/>
    </location>
    <ligand>
        <name>(1,3-beta-D-glucosyl)n</name>
        <dbReference type="ChEBI" id="CHEBI:37671"/>
        <label>1</label>
        <note>donor substrate</note>
    </ligand>
</feature>
<feature type="binding site" evidence="2">
    <location>
        <position position="168"/>
    </location>
    <ligand>
        <name>(1,3-beta-D-glucosyl)n</name>
        <dbReference type="ChEBI" id="CHEBI:37671"/>
        <label>1</label>
        <note>donor substrate</note>
    </ligand>
</feature>
<feature type="binding site" evidence="2">
    <location>
        <position position="169"/>
    </location>
    <ligand>
        <name>(1,3-beta-D-glucosyl)n</name>
        <dbReference type="ChEBI" id="CHEBI:37671"/>
        <label>2</label>
        <note>acceptor substrate</note>
    </ligand>
</feature>
<feature type="binding site" evidence="2">
    <location>
        <position position="212"/>
    </location>
    <ligand>
        <name>(1,3-beta-D-glucosyl)n</name>
        <dbReference type="ChEBI" id="CHEBI:37671"/>
        <label>2</label>
        <note>acceptor substrate</note>
    </ligand>
</feature>
<feature type="binding site" evidence="2">
    <location>
        <position position="217"/>
    </location>
    <ligand>
        <name>(1,3-beta-D-glucosyl)n</name>
        <dbReference type="ChEBI" id="CHEBI:37671"/>
        <label>2</label>
        <note>acceptor substrate</note>
    </ligand>
</feature>
<feature type="binding site" evidence="2">
    <location>
        <position position="315"/>
    </location>
    <ligand>
        <name>(1,3-beta-D-glucosyl)n</name>
        <dbReference type="ChEBI" id="CHEBI:37671"/>
        <label>1</label>
        <note>donor substrate</note>
    </ligand>
</feature>
<feature type="lipid moiety-binding region" description="GPI-anchor amidated glycine" evidence="3">
    <location>
        <position position="498"/>
    </location>
</feature>
<feature type="glycosylation site" description="N-linked (GlcNAc...) asparagine" evidence="3">
    <location>
        <position position="201"/>
    </location>
</feature>
<feature type="glycosylation site" description="N-linked (GlcNAc...) asparagine" evidence="3">
    <location>
        <position position="269"/>
    </location>
</feature>
<feature type="glycosylation site" description="N-linked (GlcNAc...) asparagine" evidence="3">
    <location>
        <position position="350"/>
    </location>
</feature>
<feature type="glycosylation site" description="N-linked (GlcNAc...) asparagine" evidence="3">
    <location>
        <position position="385"/>
    </location>
</feature>
<feature type="glycosylation site" description="N-linked (GlcNAc...) asparagine" evidence="3">
    <location>
        <position position="404"/>
    </location>
</feature>
<feature type="glycosylation site" description="N-linked (GlcNAc...) asparagine" evidence="3">
    <location>
        <position position="422"/>
    </location>
</feature>
<feature type="disulfide bond" evidence="2">
    <location>
        <begin position="78"/>
        <end position="107"/>
    </location>
</feature>
<feature type="disulfide bond" evidence="2">
    <location>
        <begin position="226"/>
        <end position="369"/>
    </location>
</feature>
<feature type="disulfide bond" evidence="2">
    <location>
        <begin position="254"/>
        <end position="286"/>
    </location>
</feature>
<organism>
    <name type="scientific">Saccharomyces cerevisiae (strain ATCC 204508 / S288c)</name>
    <name type="common">Baker's yeast</name>
    <dbReference type="NCBI Taxonomy" id="559292"/>
    <lineage>
        <taxon>Eukaryota</taxon>
        <taxon>Fungi</taxon>
        <taxon>Dikarya</taxon>
        <taxon>Ascomycota</taxon>
        <taxon>Saccharomycotina</taxon>
        <taxon>Saccharomycetes</taxon>
        <taxon>Saccharomycetales</taxon>
        <taxon>Saccharomycetaceae</taxon>
        <taxon>Saccharomyces</taxon>
    </lineage>
</organism>
<comment type="function">
    <text evidence="1 7">Splits internally a 1,3-beta-glucan molecule and transfers the newly generated reducing end (the donor) to the non-reducing end of another 1,3-beta-glucan molecule (the acceptor) forming a 1,3-beta linkage, resulting in the elongation of 1,3-beta-glucan chains in the cell wall. Involved in cell wall biosynthesis and morphogenesis (By similarity).</text>
</comment>
<comment type="subcellular location">
    <subcellularLocation>
        <location evidence="6">Secreted</location>
        <location evidence="6">Cell wall</location>
    </subcellularLocation>
    <subcellularLocation>
        <location evidence="6">Membrane</location>
        <topology evidence="6">Lipid-anchor</topology>
        <topology evidence="6">GPI-anchor</topology>
    </subcellularLocation>
    <text>Covalently-linked GPI-modified cell wall protein (GPI-CWP).</text>
</comment>
<comment type="PTM">
    <text>The GPI-anchor is attached to the protein in the endoplasmic reticulum and serves to target the protein to the cell surface. There, the glucosamine-inositol phospholipid moiety is cleaved off and the GPI-modified mannoprotein is covalently attached via its lipidless GPI glycan remnant to the 1,6-beta-glucan of the outer cell wall layer.</text>
</comment>
<comment type="PTM">
    <text evidence="8">N-glycosylated.</text>
</comment>
<comment type="miscellaneous">
    <text evidence="5">Present with 16400 molecules/cell in log phase SD medium.</text>
</comment>
<comment type="similarity">
    <text evidence="9">Belongs to the glycosyl hydrolase 72 family.</text>
</comment>
<dbReference type="EC" id="2.4.1.-"/>
<dbReference type="EMBL" id="Z49809">
    <property type="protein sequence ID" value="CAA89930.1"/>
    <property type="molecule type" value="Genomic_DNA"/>
</dbReference>
<dbReference type="EMBL" id="AY693202">
    <property type="protein sequence ID" value="AAT93221.1"/>
    <property type="molecule type" value="Genomic_DNA"/>
</dbReference>
<dbReference type="EMBL" id="BK006946">
    <property type="protein sequence ID" value="DAA10114.1"/>
    <property type="molecule type" value="Genomic_DNA"/>
</dbReference>
<dbReference type="PIR" id="S55097">
    <property type="entry name" value="S55097"/>
</dbReference>
<dbReference type="RefSeq" id="NP_013942.1">
    <property type="nucleotide sequence ID" value="NM_001182722.1"/>
</dbReference>
<dbReference type="SMR" id="Q03655"/>
<dbReference type="BioGRID" id="35393">
    <property type="interactions" value="215"/>
</dbReference>
<dbReference type="DIP" id="DIP-4410N"/>
<dbReference type="FunCoup" id="Q03655">
    <property type="interactions" value="136"/>
</dbReference>
<dbReference type="IntAct" id="Q03655">
    <property type="interactions" value="15"/>
</dbReference>
<dbReference type="MINT" id="Q03655"/>
<dbReference type="STRING" id="4932.YMR215W"/>
<dbReference type="CAZy" id="GH72">
    <property type="family name" value="Glycoside Hydrolase Family 72"/>
</dbReference>
<dbReference type="GlyCosmos" id="Q03655">
    <property type="glycosylation" value="6 sites, No reported glycans"/>
</dbReference>
<dbReference type="GlyGen" id="Q03655">
    <property type="glycosylation" value="7 sites"/>
</dbReference>
<dbReference type="iPTMnet" id="Q03655"/>
<dbReference type="PaxDb" id="4932-YMR215W"/>
<dbReference type="PeptideAtlas" id="Q03655"/>
<dbReference type="EnsemblFungi" id="YMR215W_mRNA">
    <property type="protein sequence ID" value="YMR215W"/>
    <property type="gene ID" value="YMR215W"/>
</dbReference>
<dbReference type="GeneID" id="855255"/>
<dbReference type="KEGG" id="sce:YMR215W"/>
<dbReference type="AGR" id="SGD:S000004828"/>
<dbReference type="SGD" id="S000004828">
    <property type="gene designation" value="GAS3"/>
</dbReference>
<dbReference type="VEuPathDB" id="FungiDB:YMR215W"/>
<dbReference type="eggNOG" id="ENOG502QRZZ">
    <property type="taxonomic scope" value="Eukaryota"/>
</dbReference>
<dbReference type="GeneTree" id="ENSGT00940000176308"/>
<dbReference type="HOGENOM" id="CLU_021855_1_2_1"/>
<dbReference type="InParanoid" id="Q03655"/>
<dbReference type="OMA" id="HDKCMTI"/>
<dbReference type="OrthoDB" id="421038at2759"/>
<dbReference type="BioCyc" id="YEAST:G3O-32898-MONOMER"/>
<dbReference type="BioGRID-ORCS" id="855255">
    <property type="hits" value="7 hits in 10 CRISPR screens"/>
</dbReference>
<dbReference type="PRO" id="PR:Q03655"/>
<dbReference type="Proteomes" id="UP000002311">
    <property type="component" value="Chromosome XIII"/>
</dbReference>
<dbReference type="RNAct" id="Q03655">
    <property type="molecule type" value="protein"/>
</dbReference>
<dbReference type="GO" id="GO:0005576">
    <property type="term" value="C:extracellular region"/>
    <property type="evidence" value="ECO:0007669"/>
    <property type="project" value="UniProtKB-KW"/>
</dbReference>
<dbReference type="GO" id="GO:0009277">
    <property type="term" value="C:fungal-type cell wall"/>
    <property type="evidence" value="ECO:0000314"/>
    <property type="project" value="SGD"/>
</dbReference>
<dbReference type="GO" id="GO:0000324">
    <property type="term" value="C:fungal-type vacuole"/>
    <property type="evidence" value="ECO:0007005"/>
    <property type="project" value="SGD"/>
</dbReference>
<dbReference type="GO" id="GO:0005886">
    <property type="term" value="C:plasma membrane"/>
    <property type="evidence" value="ECO:0000314"/>
    <property type="project" value="SGD"/>
</dbReference>
<dbReference type="GO" id="GO:0098552">
    <property type="term" value="C:side of membrane"/>
    <property type="evidence" value="ECO:0007669"/>
    <property type="project" value="UniProtKB-KW"/>
</dbReference>
<dbReference type="GO" id="GO:0042124">
    <property type="term" value="F:1,3-beta-glucanosyltransferase activity"/>
    <property type="evidence" value="ECO:0000250"/>
    <property type="project" value="SGD"/>
</dbReference>
<dbReference type="GO" id="GO:0071970">
    <property type="term" value="P:fungal-type cell wall (1-&gt;3)-beta-D-glucan biosynthetic process"/>
    <property type="evidence" value="ECO:0000318"/>
    <property type="project" value="GO_Central"/>
</dbReference>
<dbReference type="GO" id="GO:0031505">
    <property type="term" value="P:fungal-type cell wall organization"/>
    <property type="evidence" value="ECO:0000318"/>
    <property type="project" value="GO_Central"/>
</dbReference>
<dbReference type="FunFam" id="3.20.20.80:FF:000032">
    <property type="entry name" value="1,3-beta-glucanosyltransferase"/>
    <property type="match status" value="1"/>
</dbReference>
<dbReference type="Gene3D" id="3.20.20.80">
    <property type="entry name" value="Glycosidases"/>
    <property type="match status" value="1"/>
</dbReference>
<dbReference type="InterPro" id="IPR004886">
    <property type="entry name" value="Glucanosyltransferase"/>
</dbReference>
<dbReference type="InterPro" id="IPR017853">
    <property type="entry name" value="Glycoside_hydrolase_SF"/>
</dbReference>
<dbReference type="PANTHER" id="PTHR31468">
    <property type="entry name" value="1,3-BETA-GLUCANOSYLTRANSFERASE GAS1"/>
    <property type="match status" value="1"/>
</dbReference>
<dbReference type="PANTHER" id="PTHR31468:SF4">
    <property type="entry name" value="1,3-BETA-GLUCANOSYLTRANSFERASE GAS3-RELATED"/>
    <property type="match status" value="1"/>
</dbReference>
<dbReference type="Pfam" id="PF03198">
    <property type="entry name" value="Glyco_hydro_72"/>
    <property type="match status" value="1"/>
</dbReference>
<dbReference type="SUPFAM" id="SSF51445">
    <property type="entry name" value="(Trans)glycosidases"/>
    <property type="match status" value="1"/>
</dbReference>
<keyword id="KW-0134">Cell wall</keyword>
<keyword id="KW-0961">Cell wall biogenesis/degradation</keyword>
<keyword id="KW-1015">Disulfide bond</keyword>
<keyword id="KW-0325">Glycoprotein</keyword>
<keyword id="KW-0336">GPI-anchor</keyword>
<keyword id="KW-0449">Lipoprotein</keyword>
<keyword id="KW-0472">Membrane</keyword>
<keyword id="KW-1185">Reference proteome</keyword>
<keyword id="KW-0964">Secreted</keyword>
<keyword id="KW-0732">Signal</keyword>
<keyword id="KW-0808">Transferase</keyword>
<protein>
    <recommendedName>
        <fullName>Probable 1,3-beta-glucanosyltransferase GAS3</fullName>
        <ecNumber>2.4.1.-</ecNumber>
    </recommendedName>
    <alternativeName>
        <fullName>Glycolipid-anchored surface protein 3</fullName>
    </alternativeName>
</protein>
<proteinExistence type="evidence at protein level"/>
<evidence type="ECO:0000250" key="1"/>
<evidence type="ECO:0000250" key="2">
    <source>
        <dbReference type="UniProtKB" id="Q06135"/>
    </source>
</evidence>
<evidence type="ECO:0000255" key="3"/>
<evidence type="ECO:0000256" key="4">
    <source>
        <dbReference type="SAM" id="MobiDB-lite"/>
    </source>
</evidence>
<evidence type="ECO:0000269" key="5">
    <source>
    </source>
</evidence>
<evidence type="ECO:0000269" key="6">
    <source>
    </source>
</evidence>
<evidence type="ECO:0000269" key="7">
    <source>
    </source>
</evidence>
<evidence type="ECO:0000269" key="8">
    <source>
    </source>
</evidence>
<evidence type="ECO:0000305" key="9"/>
<accession>Q03655</accession>
<accession>D6W040</accession>
<gene>
    <name type="primary">GAS3</name>
    <name type="ordered locus">YMR215W</name>
    <name type="ORF">YM8261.09</name>
</gene>